<reference key="1">
    <citation type="journal article" date="2001" name="Proc. Natl. Acad. Sci. U.S.A.">
        <title>Analysis of the chromosome sequence of the legume symbiont Sinorhizobium meliloti strain 1021.</title>
        <authorList>
            <person name="Capela D."/>
            <person name="Barloy-Hubler F."/>
            <person name="Gouzy J."/>
            <person name="Bothe G."/>
            <person name="Ampe F."/>
            <person name="Batut J."/>
            <person name="Boistard P."/>
            <person name="Becker A."/>
            <person name="Boutry M."/>
            <person name="Cadieu E."/>
            <person name="Dreano S."/>
            <person name="Gloux S."/>
            <person name="Godrie T."/>
            <person name="Goffeau A."/>
            <person name="Kahn D."/>
            <person name="Kiss E."/>
            <person name="Lelaure V."/>
            <person name="Masuy D."/>
            <person name="Pohl T."/>
            <person name="Portetelle D."/>
            <person name="Puehler A."/>
            <person name="Purnelle B."/>
            <person name="Ramsperger U."/>
            <person name="Renard C."/>
            <person name="Thebault P."/>
            <person name="Vandenbol M."/>
            <person name="Weidner S."/>
            <person name="Galibert F."/>
        </authorList>
    </citation>
    <scope>NUCLEOTIDE SEQUENCE [LARGE SCALE GENOMIC DNA]</scope>
    <source>
        <strain>1021</strain>
    </source>
</reference>
<reference key="2">
    <citation type="journal article" date="2001" name="Science">
        <title>The composite genome of the legume symbiont Sinorhizobium meliloti.</title>
        <authorList>
            <person name="Galibert F."/>
            <person name="Finan T.M."/>
            <person name="Long S.R."/>
            <person name="Puehler A."/>
            <person name="Abola P."/>
            <person name="Ampe F."/>
            <person name="Barloy-Hubler F."/>
            <person name="Barnett M.J."/>
            <person name="Becker A."/>
            <person name="Boistard P."/>
            <person name="Bothe G."/>
            <person name="Boutry M."/>
            <person name="Bowser L."/>
            <person name="Buhrmester J."/>
            <person name="Cadieu E."/>
            <person name="Capela D."/>
            <person name="Chain P."/>
            <person name="Cowie A."/>
            <person name="Davis R.W."/>
            <person name="Dreano S."/>
            <person name="Federspiel N.A."/>
            <person name="Fisher R.F."/>
            <person name="Gloux S."/>
            <person name="Godrie T."/>
            <person name="Goffeau A."/>
            <person name="Golding B."/>
            <person name="Gouzy J."/>
            <person name="Gurjal M."/>
            <person name="Hernandez-Lucas I."/>
            <person name="Hong A."/>
            <person name="Huizar L."/>
            <person name="Hyman R.W."/>
            <person name="Jones T."/>
            <person name="Kahn D."/>
            <person name="Kahn M.L."/>
            <person name="Kalman S."/>
            <person name="Keating D.H."/>
            <person name="Kiss E."/>
            <person name="Komp C."/>
            <person name="Lelaure V."/>
            <person name="Masuy D."/>
            <person name="Palm C."/>
            <person name="Peck M.C."/>
            <person name="Pohl T.M."/>
            <person name="Portetelle D."/>
            <person name="Purnelle B."/>
            <person name="Ramsperger U."/>
            <person name="Surzycki R."/>
            <person name="Thebault P."/>
            <person name="Vandenbol M."/>
            <person name="Vorhoelter F.J."/>
            <person name="Weidner S."/>
            <person name="Wells D.H."/>
            <person name="Wong K."/>
            <person name="Yeh K.-C."/>
            <person name="Batut J."/>
        </authorList>
    </citation>
    <scope>NUCLEOTIDE SEQUENCE [LARGE SCALE GENOMIC DNA]</scope>
    <source>
        <strain>1021</strain>
    </source>
</reference>
<protein>
    <recommendedName>
        <fullName evidence="1">Valine--tRNA ligase</fullName>
        <ecNumber evidence="1">6.1.1.9</ecNumber>
    </recommendedName>
    <alternativeName>
        <fullName evidence="1">Valyl-tRNA synthetase</fullName>
        <shortName evidence="1">ValRS</shortName>
    </alternativeName>
</protein>
<dbReference type="EC" id="6.1.1.9" evidence="1"/>
<dbReference type="EMBL" id="AL591688">
    <property type="protein sequence ID" value="CAC46095.1"/>
    <property type="molecule type" value="Genomic_DNA"/>
</dbReference>
<dbReference type="RefSeq" id="NP_385622.1">
    <property type="nucleotide sequence ID" value="NC_003047.1"/>
</dbReference>
<dbReference type="RefSeq" id="WP_010969272.1">
    <property type="nucleotide sequence ID" value="NC_003047.1"/>
</dbReference>
<dbReference type="SMR" id="Q92Q37"/>
<dbReference type="EnsemblBacteria" id="CAC46095">
    <property type="protein sequence ID" value="CAC46095"/>
    <property type="gene ID" value="SMc02080"/>
</dbReference>
<dbReference type="KEGG" id="sme:SMc02080"/>
<dbReference type="PATRIC" id="fig|266834.11.peg.2938"/>
<dbReference type="eggNOG" id="COG0525">
    <property type="taxonomic scope" value="Bacteria"/>
</dbReference>
<dbReference type="HOGENOM" id="CLU_001493_0_2_5"/>
<dbReference type="OrthoDB" id="9810365at2"/>
<dbReference type="Proteomes" id="UP000001976">
    <property type="component" value="Chromosome"/>
</dbReference>
<dbReference type="GO" id="GO:0005829">
    <property type="term" value="C:cytosol"/>
    <property type="evidence" value="ECO:0007669"/>
    <property type="project" value="TreeGrafter"/>
</dbReference>
<dbReference type="GO" id="GO:0002161">
    <property type="term" value="F:aminoacyl-tRNA deacylase activity"/>
    <property type="evidence" value="ECO:0007669"/>
    <property type="project" value="InterPro"/>
</dbReference>
<dbReference type="GO" id="GO:0005524">
    <property type="term" value="F:ATP binding"/>
    <property type="evidence" value="ECO:0007669"/>
    <property type="project" value="UniProtKB-UniRule"/>
</dbReference>
<dbReference type="GO" id="GO:0004832">
    <property type="term" value="F:valine-tRNA ligase activity"/>
    <property type="evidence" value="ECO:0007669"/>
    <property type="project" value="UniProtKB-UniRule"/>
</dbReference>
<dbReference type="GO" id="GO:0006438">
    <property type="term" value="P:valyl-tRNA aminoacylation"/>
    <property type="evidence" value="ECO:0007669"/>
    <property type="project" value="UniProtKB-UniRule"/>
</dbReference>
<dbReference type="CDD" id="cd07962">
    <property type="entry name" value="Anticodon_Ia_Val"/>
    <property type="match status" value="1"/>
</dbReference>
<dbReference type="CDD" id="cd00817">
    <property type="entry name" value="ValRS_core"/>
    <property type="match status" value="1"/>
</dbReference>
<dbReference type="FunFam" id="3.40.50.620:FF:000032">
    <property type="entry name" value="Valine--tRNA ligase"/>
    <property type="match status" value="1"/>
</dbReference>
<dbReference type="Gene3D" id="3.40.50.620">
    <property type="entry name" value="HUPs"/>
    <property type="match status" value="2"/>
</dbReference>
<dbReference type="Gene3D" id="1.10.730.10">
    <property type="entry name" value="Isoleucyl-tRNA Synthetase, Domain 1"/>
    <property type="match status" value="1"/>
</dbReference>
<dbReference type="Gene3D" id="1.10.287.380">
    <property type="entry name" value="Valyl-tRNA synthetase, C-terminal domain"/>
    <property type="match status" value="1"/>
</dbReference>
<dbReference type="Gene3D" id="3.90.740.10">
    <property type="entry name" value="Valyl/Leucyl/Isoleucyl-tRNA synthetase, editing domain"/>
    <property type="match status" value="1"/>
</dbReference>
<dbReference type="HAMAP" id="MF_02004">
    <property type="entry name" value="Val_tRNA_synth_type1"/>
    <property type="match status" value="1"/>
</dbReference>
<dbReference type="InterPro" id="IPR001412">
    <property type="entry name" value="aa-tRNA-synth_I_CS"/>
</dbReference>
<dbReference type="InterPro" id="IPR002300">
    <property type="entry name" value="aa-tRNA-synth_Ia"/>
</dbReference>
<dbReference type="InterPro" id="IPR033705">
    <property type="entry name" value="Anticodon_Ia_Val"/>
</dbReference>
<dbReference type="InterPro" id="IPR013155">
    <property type="entry name" value="M/V/L/I-tRNA-synth_anticd-bd"/>
</dbReference>
<dbReference type="InterPro" id="IPR014729">
    <property type="entry name" value="Rossmann-like_a/b/a_fold"/>
</dbReference>
<dbReference type="InterPro" id="IPR010978">
    <property type="entry name" value="tRNA-bd_arm"/>
</dbReference>
<dbReference type="InterPro" id="IPR009080">
    <property type="entry name" value="tRNAsynth_Ia_anticodon-bd"/>
</dbReference>
<dbReference type="InterPro" id="IPR037118">
    <property type="entry name" value="Val-tRNA_synth_C_sf"/>
</dbReference>
<dbReference type="InterPro" id="IPR019499">
    <property type="entry name" value="Val-tRNA_synth_tRNA-bd"/>
</dbReference>
<dbReference type="InterPro" id="IPR009008">
    <property type="entry name" value="Val/Leu/Ile-tRNA-synth_edit"/>
</dbReference>
<dbReference type="InterPro" id="IPR002303">
    <property type="entry name" value="Valyl-tRNA_ligase"/>
</dbReference>
<dbReference type="NCBIfam" id="NF004349">
    <property type="entry name" value="PRK05729.1"/>
    <property type="match status" value="1"/>
</dbReference>
<dbReference type="NCBIfam" id="TIGR00422">
    <property type="entry name" value="valS"/>
    <property type="match status" value="1"/>
</dbReference>
<dbReference type="PANTHER" id="PTHR11946:SF93">
    <property type="entry name" value="VALINE--TRNA LIGASE, CHLOROPLASTIC_MITOCHONDRIAL 2"/>
    <property type="match status" value="1"/>
</dbReference>
<dbReference type="PANTHER" id="PTHR11946">
    <property type="entry name" value="VALYL-TRNA SYNTHETASES"/>
    <property type="match status" value="1"/>
</dbReference>
<dbReference type="Pfam" id="PF08264">
    <property type="entry name" value="Anticodon_1"/>
    <property type="match status" value="1"/>
</dbReference>
<dbReference type="Pfam" id="PF00133">
    <property type="entry name" value="tRNA-synt_1"/>
    <property type="match status" value="1"/>
</dbReference>
<dbReference type="Pfam" id="PF10458">
    <property type="entry name" value="Val_tRNA-synt_C"/>
    <property type="match status" value="1"/>
</dbReference>
<dbReference type="PRINTS" id="PR00986">
    <property type="entry name" value="TRNASYNTHVAL"/>
</dbReference>
<dbReference type="SUPFAM" id="SSF47323">
    <property type="entry name" value="Anticodon-binding domain of a subclass of class I aminoacyl-tRNA synthetases"/>
    <property type="match status" value="1"/>
</dbReference>
<dbReference type="SUPFAM" id="SSF52374">
    <property type="entry name" value="Nucleotidylyl transferase"/>
    <property type="match status" value="1"/>
</dbReference>
<dbReference type="SUPFAM" id="SSF46589">
    <property type="entry name" value="tRNA-binding arm"/>
    <property type="match status" value="1"/>
</dbReference>
<dbReference type="SUPFAM" id="SSF50677">
    <property type="entry name" value="ValRS/IleRS/LeuRS editing domain"/>
    <property type="match status" value="1"/>
</dbReference>
<dbReference type="PROSITE" id="PS00178">
    <property type="entry name" value="AA_TRNA_LIGASE_I"/>
    <property type="match status" value="1"/>
</dbReference>
<name>SYV_RHIME</name>
<proteinExistence type="inferred from homology"/>
<evidence type="ECO:0000255" key="1">
    <source>
        <dbReference type="HAMAP-Rule" id="MF_02004"/>
    </source>
</evidence>
<comment type="function">
    <text evidence="1">Catalyzes the attachment of valine to tRNA(Val). As ValRS can inadvertently accommodate and process structurally similar amino acids such as threonine, to avoid such errors, it has a 'posttransfer' editing activity that hydrolyzes mischarged Thr-tRNA(Val) in a tRNA-dependent manner.</text>
</comment>
<comment type="catalytic activity">
    <reaction evidence="1">
        <text>tRNA(Val) + L-valine + ATP = L-valyl-tRNA(Val) + AMP + diphosphate</text>
        <dbReference type="Rhea" id="RHEA:10704"/>
        <dbReference type="Rhea" id="RHEA-COMP:9672"/>
        <dbReference type="Rhea" id="RHEA-COMP:9708"/>
        <dbReference type="ChEBI" id="CHEBI:30616"/>
        <dbReference type="ChEBI" id="CHEBI:33019"/>
        <dbReference type="ChEBI" id="CHEBI:57762"/>
        <dbReference type="ChEBI" id="CHEBI:78442"/>
        <dbReference type="ChEBI" id="CHEBI:78537"/>
        <dbReference type="ChEBI" id="CHEBI:456215"/>
        <dbReference type="EC" id="6.1.1.9"/>
    </reaction>
</comment>
<comment type="subunit">
    <text evidence="1">Monomer.</text>
</comment>
<comment type="subcellular location">
    <subcellularLocation>
        <location evidence="1">Cytoplasm</location>
    </subcellularLocation>
</comment>
<comment type="domain">
    <text evidence="1">ValRS has two distinct active sites: one for aminoacylation and one for editing. The misactivated threonine is translocated from the active site to the editing site.</text>
</comment>
<comment type="similarity">
    <text evidence="1">Belongs to the class-I aminoacyl-tRNA synthetase family. ValS type 1 subfamily.</text>
</comment>
<feature type="chain" id="PRO_0000224545" description="Valine--tRNA ligase">
    <location>
        <begin position="1"/>
        <end position="947"/>
    </location>
</feature>
<feature type="short sequence motif" description="'HIGH' region">
    <location>
        <begin position="45"/>
        <end position="55"/>
    </location>
</feature>
<feature type="short sequence motif" description="'KMSKS' region">
    <location>
        <begin position="591"/>
        <end position="595"/>
    </location>
</feature>
<feature type="binding site" evidence="1">
    <location>
        <position position="594"/>
    </location>
    <ligand>
        <name>ATP</name>
        <dbReference type="ChEBI" id="CHEBI:30616"/>
    </ligand>
</feature>
<organism>
    <name type="scientific">Rhizobium meliloti (strain 1021)</name>
    <name type="common">Ensifer meliloti</name>
    <name type="synonym">Sinorhizobium meliloti</name>
    <dbReference type="NCBI Taxonomy" id="266834"/>
    <lineage>
        <taxon>Bacteria</taxon>
        <taxon>Pseudomonadati</taxon>
        <taxon>Pseudomonadota</taxon>
        <taxon>Alphaproteobacteria</taxon>
        <taxon>Hyphomicrobiales</taxon>
        <taxon>Rhizobiaceae</taxon>
        <taxon>Sinorhizobium/Ensifer group</taxon>
        <taxon>Sinorhizobium</taxon>
    </lineage>
</organism>
<gene>
    <name evidence="1" type="primary">valS</name>
    <name type="ordered locus">R01516</name>
    <name type="ORF">SMc02080</name>
</gene>
<accession>Q92Q37</accession>
<keyword id="KW-0030">Aminoacyl-tRNA synthetase</keyword>
<keyword id="KW-0067">ATP-binding</keyword>
<keyword id="KW-0963">Cytoplasm</keyword>
<keyword id="KW-0436">Ligase</keyword>
<keyword id="KW-0547">Nucleotide-binding</keyword>
<keyword id="KW-0648">Protein biosynthesis</keyword>
<keyword id="KW-1185">Reference proteome</keyword>
<sequence length="947" mass="107102">MLDKTYDSAAVEPKIAKAWDEADAFRAGVNAKPDAETFTIVIPPPNVTGSLHMGHALNNTLQDIMVRFERMRGKDVLWQPGMDHAGIATQMVVERQLMERQLPSRRDMGREAFIERVWEWKAESGGLIFNQLKRLGASCDWSRERFTMDEGLSEAVIEVFVSLYKEGLIYRDTRLVNWDPKLQTAISDIEVEPVEVNGHLWHLRYPLEEGVTYQHPVAFDEDGNATEWETRNYLVVATTRPETMLGDTGVAVHPDDVRYKGIVGKHVILPIVGRRIPIVADEYPDPTTGTGAVKMTPAHDFNDFDVGKRQGLRQVNVLTADGRITIKNNEDFLEGLDHPAALHGAWDRLEGKDRFEARKLIVEMLEEAGLVDHIEPHKHMVPHGDRGGVPIEPRLTEQWYVDAKTLAKPAIAAVKEGRTNFVPKNWEKTFFEWMENIQPWCISRQLWWGHQIPAWYGPDGQIFVERNEEEALHAAIQHYIAHEGPMKAYVEDLLENFKPGEILTRDEDVLDTWFSSALWPFSTLGWPKETPELDKYYQTDVLVTGFDIIFFWVARMMMMGLHFMKDADGTPVEPFHTVYVHALVRDKNGQKMSKSKGNVIDPLELIDEYGADALRFTLAIMAAQGRDVKLDPARIAGYRNFGTKLWNATRFAEMNGAISSEGFIPEAASLTINRWILTELSRTIRDVSEAIEDYRFNEAAGALYRFVWNQFCDWYLELLKPVFNGDDEAAKRESQACTAYVLDEIYKLLHPFMPFMTEELWEKTTGPGRERTTLLCHAEWPAAFYADDAAADEINWLIDLVSGIRSVRAEMNVPPAAMAPLVIVGAKALTSERLDRHASAIKRLARVENIEHASVAPRGSAQIVVGEATACLPLGSLIDLGAEKLRLEKAIAKVDVERERILGKLANEKFVANAKPELVEAERERLVELDLQRDSLGVALSRVSEAG</sequence>